<sequence>MKLLHLDASVLGDNSVSRQLSAAVVARFTGQIDGLQVDYRDLDANPVPHLRSSSLARTDAAEATDAEQVMQQFLDADIVVIGAPMYNFSIPSTLKAWIDRVAVAGRTFKYTENGPVGLASGKRVIIASSRGGIYTDSPADFQEPFLRQVFAFMGINEVEFVRAEGIAYSPQHREDAIAGALAALPSHEVVEAVAA</sequence>
<evidence type="ECO:0000255" key="1">
    <source>
        <dbReference type="HAMAP-Rule" id="MF_01216"/>
    </source>
</evidence>
<organism>
    <name type="scientific">Stenotrophomonas maltophilia (strain K279a)</name>
    <dbReference type="NCBI Taxonomy" id="522373"/>
    <lineage>
        <taxon>Bacteria</taxon>
        <taxon>Pseudomonadati</taxon>
        <taxon>Pseudomonadota</taxon>
        <taxon>Gammaproteobacteria</taxon>
        <taxon>Lysobacterales</taxon>
        <taxon>Lysobacteraceae</taxon>
        <taxon>Stenotrophomonas</taxon>
        <taxon>Stenotrophomonas maltophilia group</taxon>
    </lineage>
</organism>
<dbReference type="EC" id="1.6.5.-" evidence="1"/>
<dbReference type="EC" id="1.7.1.17" evidence="1"/>
<dbReference type="EMBL" id="AM743169">
    <property type="protein sequence ID" value="CAQ46538.1"/>
    <property type="molecule type" value="Genomic_DNA"/>
</dbReference>
<dbReference type="RefSeq" id="WP_012480714.1">
    <property type="nucleotide sequence ID" value="NC_010943.1"/>
</dbReference>
<dbReference type="SMR" id="B2FKE2"/>
<dbReference type="EnsemblBacteria" id="CAQ46538">
    <property type="protein sequence ID" value="CAQ46538"/>
    <property type="gene ID" value="Smlt3090"/>
</dbReference>
<dbReference type="KEGG" id="sml:Smlt3090"/>
<dbReference type="PATRIC" id="fig|522373.3.peg.2894"/>
<dbReference type="eggNOG" id="COG1182">
    <property type="taxonomic scope" value="Bacteria"/>
</dbReference>
<dbReference type="HOGENOM" id="CLU_088964_0_0_6"/>
<dbReference type="Proteomes" id="UP000008840">
    <property type="component" value="Chromosome"/>
</dbReference>
<dbReference type="GO" id="GO:0009055">
    <property type="term" value="F:electron transfer activity"/>
    <property type="evidence" value="ECO:0007669"/>
    <property type="project" value="UniProtKB-UniRule"/>
</dbReference>
<dbReference type="GO" id="GO:0010181">
    <property type="term" value="F:FMN binding"/>
    <property type="evidence" value="ECO:0007669"/>
    <property type="project" value="UniProtKB-UniRule"/>
</dbReference>
<dbReference type="GO" id="GO:0016652">
    <property type="term" value="F:oxidoreductase activity, acting on NAD(P)H as acceptor"/>
    <property type="evidence" value="ECO:0007669"/>
    <property type="project" value="UniProtKB-UniRule"/>
</dbReference>
<dbReference type="GO" id="GO:0016655">
    <property type="term" value="F:oxidoreductase activity, acting on NAD(P)H, quinone or similar compound as acceptor"/>
    <property type="evidence" value="ECO:0007669"/>
    <property type="project" value="InterPro"/>
</dbReference>
<dbReference type="Gene3D" id="3.40.50.360">
    <property type="match status" value="1"/>
</dbReference>
<dbReference type="HAMAP" id="MF_01216">
    <property type="entry name" value="Azoreductase_type1"/>
    <property type="match status" value="1"/>
</dbReference>
<dbReference type="InterPro" id="IPR003680">
    <property type="entry name" value="Flavodoxin_fold"/>
</dbReference>
<dbReference type="InterPro" id="IPR029039">
    <property type="entry name" value="Flavoprotein-like_sf"/>
</dbReference>
<dbReference type="InterPro" id="IPR050104">
    <property type="entry name" value="FMN-dep_NADH:Q_OxRdtase_AzoR1"/>
</dbReference>
<dbReference type="InterPro" id="IPR023048">
    <property type="entry name" value="NADH:quinone_OxRdtase_FMN_depd"/>
</dbReference>
<dbReference type="PANTHER" id="PTHR43741">
    <property type="entry name" value="FMN-DEPENDENT NADH-AZOREDUCTASE 1"/>
    <property type="match status" value="1"/>
</dbReference>
<dbReference type="PANTHER" id="PTHR43741:SF4">
    <property type="entry name" value="FMN-DEPENDENT NADH:QUINONE OXIDOREDUCTASE"/>
    <property type="match status" value="1"/>
</dbReference>
<dbReference type="Pfam" id="PF02525">
    <property type="entry name" value="Flavodoxin_2"/>
    <property type="match status" value="1"/>
</dbReference>
<dbReference type="SUPFAM" id="SSF52218">
    <property type="entry name" value="Flavoproteins"/>
    <property type="match status" value="1"/>
</dbReference>
<reference key="1">
    <citation type="journal article" date="2008" name="Genome Biol.">
        <title>The complete genome, comparative and functional analysis of Stenotrophomonas maltophilia reveals an organism heavily shielded by drug resistance determinants.</title>
        <authorList>
            <person name="Crossman L.C."/>
            <person name="Gould V.C."/>
            <person name="Dow J.M."/>
            <person name="Vernikos G.S."/>
            <person name="Okazaki A."/>
            <person name="Sebaihia M."/>
            <person name="Saunders D."/>
            <person name="Arrowsmith C."/>
            <person name="Carver T."/>
            <person name="Peters N."/>
            <person name="Adlem E."/>
            <person name="Kerhornou A."/>
            <person name="Lord A."/>
            <person name="Murphy L."/>
            <person name="Seeger K."/>
            <person name="Squares R."/>
            <person name="Rutter S."/>
            <person name="Quail M.A."/>
            <person name="Rajandream M.A."/>
            <person name="Harris D."/>
            <person name="Churcher C."/>
            <person name="Bentley S.D."/>
            <person name="Parkhill J."/>
            <person name="Thomson N.R."/>
            <person name="Avison M.B."/>
        </authorList>
    </citation>
    <scope>NUCLEOTIDE SEQUENCE [LARGE SCALE GENOMIC DNA]</scope>
    <source>
        <strain>K279a</strain>
    </source>
</reference>
<feature type="chain" id="PRO_1000138988" description="FMN-dependent NADH:quinone oxidoreductase">
    <location>
        <begin position="1"/>
        <end position="195"/>
    </location>
</feature>
<feature type="binding site" evidence="1">
    <location>
        <position position="9"/>
    </location>
    <ligand>
        <name>FMN</name>
        <dbReference type="ChEBI" id="CHEBI:58210"/>
    </ligand>
</feature>
<feature type="binding site" evidence="1">
    <location>
        <begin position="15"/>
        <end position="17"/>
    </location>
    <ligand>
        <name>FMN</name>
        <dbReference type="ChEBI" id="CHEBI:58210"/>
    </ligand>
</feature>
<feature type="binding site" evidence="1">
    <location>
        <begin position="85"/>
        <end position="88"/>
    </location>
    <ligand>
        <name>FMN</name>
        <dbReference type="ChEBI" id="CHEBI:58210"/>
    </ligand>
</feature>
<feature type="binding site" evidence="1">
    <location>
        <begin position="129"/>
        <end position="132"/>
    </location>
    <ligand>
        <name>FMN</name>
        <dbReference type="ChEBI" id="CHEBI:58210"/>
    </ligand>
</feature>
<gene>
    <name evidence="1" type="primary">azoR</name>
    <name type="ordered locus">Smlt3090</name>
</gene>
<name>AZOR_STRMK</name>
<proteinExistence type="inferred from homology"/>
<keyword id="KW-0285">Flavoprotein</keyword>
<keyword id="KW-0288">FMN</keyword>
<keyword id="KW-0520">NAD</keyword>
<keyword id="KW-0560">Oxidoreductase</keyword>
<keyword id="KW-1185">Reference proteome</keyword>
<comment type="function">
    <text evidence="1">Quinone reductase that provides resistance to thiol-specific stress caused by electrophilic quinones.</text>
</comment>
<comment type="function">
    <text evidence="1">Also exhibits azoreductase activity. Catalyzes the reductive cleavage of the azo bond in aromatic azo compounds to the corresponding amines.</text>
</comment>
<comment type="catalytic activity">
    <reaction evidence="1">
        <text>2 a quinone + NADH + H(+) = 2 a 1,4-benzosemiquinone + NAD(+)</text>
        <dbReference type="Rhea" id="RHEA:65952"/>
        <dbReference type="ChEBI" id="CHEBI:15378"/>
        <dbReference type="ChEBI" id="CHEBI:57540"/>
        <dbReference type="ChEBI" id="CHEBI:57945"/>
        <dbReference type="ChEBI" id="CHEBI:132124"/>
        <dbReference type="ChEBI" id="CHEBI:134225"/>
    </reaction>
</comment>
<comment type="catalytic activity">
    <reaction evidence="1">
        <text>N,N-dimethyl-1,4-phenylenediamine + anthranilate + 2 NAD(+) = 2-(4-dimethylaminophenyl)diazenylbenzoate + 2 NADH + 2 H(+)</text>
        <dbReference type="Rhea" id="RHEA:55872"/>
        <dbReference type="ChEBI" id="CHEBI:15378"/>
        <dbReference type="ChEBI" id="CHEBI:15783"/>
        <dbReference type="ChEBI" id="CHEBI:16567"/>
        <dbReference type="ChEBI" id="CHEBI:57540"/>
        <dbReference type="ChEBI" id="CHEBI:57945"/>
        <dbReference type="ChEBI" id="CHEBI:71579"/>
        <dbReference type="EC" id="1.7.1.17"/>
    </reaction>
</comment>
<comment type="cofactor">
    <cofactor evidence="1">
        <name>FMN</name>
        <dbReference type="ChEBI" id="CHEBI:58210"/>
    </cofactor>
    <text evidence="1">Binds 1 FMN per subunit.</text>
</comment>
<comment type="subunit">
    <text evidence="1">Homodimer.</text>
</comment>
<comment type="similarity">
    <text evidence="1">Belongs to the azoreductase type 1 family.</text>
</comment>
<accession>B2FKE2</accession>
<protein>
    <recommendedName>
        <fullName evidence="1">FMN-dependent NADH:quinone oxidoreductase</fullName>
        <ecNumber evidence="1">1.6.5.-</ecNumber>
    </recommendedName>
    <alternativeName>
        <fullName evidence="1">Azo-dye reductase</fullName>
    </alternativeName>
    <alternativeName>
        <fullName evidence="1">FMN-dependent NADH-azo compound oxidoreductase</fullName>
    </alternativeName>
    <alternativeName>
        <fullName evidence="1">FMN-dependent NADH-azoreductase</fullName>
        <ecNumber evidence="1">1.7.1.17</ecNumber>
    </alternativeName>
</protein>